<keyword id="KW-0067">ATP-binding</keyword>
<keyword id="KW-0315">Glutamine amidotransferase</keyword>
<keyword id="KW-0332">GMP biosynthesis</keyword>
<keyword id="KW-0436">Ligase</keyword>
<keyword id="KW-0547">Nucleotide-binding</keyword>
<keyword id="KW-0658">Purine biosynthesis</keyword>
<accession>A1W0N3</accession>
<comment type="function">
    <text evidence="1">Catalyzes the synthesis of GMP from XMP.</text>
</comment>
<comment type="catalytic activity">
    <reaction evidence="1">
        <text>XMP + L-glutamine + ATP + H2O = GMP + L-glutamate + AMP + diphosphate + 2 H(+)</text>
        <dbReference type="Rhea" id="RHEA:11680"/>
        <dbReference type="ChEBI" id="CHEBI:15377"/>
        <dbReference type="ChEBI" id="CHEBI:15378"/>
        <dbReference type="ChEBI" id="CHEBI:29985"/>
        <dbReference type="ChEBI" id="CHEBI:30616"/>
        <dbReference type="ChEBI" id="CHEBI:33019"/>
        <dbReference type="ChEBI" id="CHEBI:57464"/>
        <dbReference type="ChEBI" id="CHEBI:58115"/>
        <dbReference type="ChEBI" id="CHEBI:58359"/>
        <dbReference type="ChEBI" id="CHEBI:456215"/>
        <dbReference type="EC" id="6.3.5.2"/>
    </reaction>
</comment>
<comment type="pathway">
    <text evidence="1">Purine metabolism; GMP biosynthesis; GMP from XMP (L-Gln route): step 1/1.</text>
</comment>
<comment type="subunit">
    <text evidence="1">Homodimer.</text>
</comment>
<gene>
    <name evidence="1" type="primary">guaA</name>
    <name type="ordered locus">CJJ81176_1264</name>
</gene>
<evidence type="ECO:0000255" key="1">
    <source>
        <dbReference type="HAMAP-Rule" id="MF_00344"/>
    </source>
</evidence>
<reference key="1">
    <citation type="submission" date="2006-12" db="EMBL/GenBank/DDBJ databases">
        <authorList>
            <person name="Fouts D.E."/>
            <person name="Nelson K.E."/>
            <person name="Sebastian Y."/>
        </authorList>
    </citation>
    <scope>NUCLEOTIDE SEQUENCE [LARGE SCALE GENOMIC DNA]</scope>
    <source>
        <strain>81-176</strain>
    </source>
</reference>
<name>GUAA_CAMJJ</name>
<organism>
    <name type="scientific">Campylobacter jejuni subsp. jejuni serotype O:23/36 (strain 81-176)</name>
    <dbReference type="NCBI Taxonomy" id="354242"/>
    <lineage>
        <taxon>Bacteria</taxon>
        <taxon>Pseudomonadati</taxon>
        <taxon>Campylobacterota</taxon>
        <taxon>Epsilonproteobacteria</taxon>
        <taxon>Campylobacterales</taxon>
        <taxon>Campylobacteraceae</taxon>
        <taxon>Campylobacter</taxon>
    </lineage>
</organism>
<protein>
    <recommendedName>
        <fullName evidence="1">GMP synthase [glutamine-hydrolyzing]</fullName>
        <ecNumber evidence="1">6.3.5.2</ecNumber>
    </recommendedName>
    <alternativeName>
        <fullName evidence="1">GMP synthetase</fullName>
    </alternativeName>
    <alternativeName>
        <fullName evidence="1">Glutamine amidotransferase</fullName>
    </alternativeName>
</protein>
<proteinExistence type="inferred from homology"/>
<dbReference type="EC" id="6.3.5.2" evidence="1"/>
<dbReference type="EMBL" id="CP000538">
    <property type="protein sequence ID" value="EAQ72894.1"/>
    <property type="molecule type" value="Genomic_DNA"/>
</dbReference>
<dbReference type="RefSeq" id="WP_002869077.1">
    <property type="nucleotide sequence ID" value="NC_008787.1"/>
</dbReference>
<dbReference type="SMR" id="A1W0N3"/>
<dbReference type="MEROPS" id="C26.957"/>
<dbReference type="KEGG" id="cjj:CJJ81176_1264"/>
<dbReference type="eggNOG" id="COG0518">
    <property type="taxonomic scope" value="Bacteria"/>
</dbReference>
<dbReference type="eggNOG" id="COG0519">
    <property type="taxonomic scope" value="Bacteria"/>
</dbReference>
<dbReference type="HOGENOM" id="CLU_014340_0_5_7"/>
<dbReference type="UniPathway" id="UPA00189">
    <property type="reaction ID" value="UER00296"/>
</dbReference>
<dbReference type="Proteomes" id="UP000000646">
    <property type="component" value="Chromosome"/>
</dbReference>
<dbReference type="GO" id="GO:0005829">
    <property type="term" value="C:cytosol"/>
    <property type="evidence" value="ECO:0007669"/>
    <property type="project" value="TreeGrafter"/>
</dbReference>
<dbReference type="GO" id="GO:0005524">
    <property type="term" value="F:ATP binding"/>
    <property type="evidence" value="ECO:0007669"/>
    <property type="project" value="UniProtKB-UniRule"/>
</dbReference>
<dbReference type="GO" id="GO:0003921">
    <property type="term" value="F:GMP synthase activity"/>
    <property type="evidence" value="ECO:0007669"/>
    <property type="project" value="InterPro"/>
</dbReference>
<dbReference type="CDD" id="cd01742">
    <property type="entry name" value="GATase1_GMP_Synthase"/>
    <property type="match status" value="1"/>
</dbReference>
<dbReference type="CDD" id="cd01997">
    <property type="entry name" value="GMP_synthase_C"/>
    <property type="match status" value="1"/>
</dbReference>
<dbReference type="FunFam" id="3.30.300.10:FF:000002">
    <property type="entry name" value="GMP synthase [glutamine-hydrolyzing]"/>
    <property type="match status" value="1"/>
</dbReference>
<dbReference type="FunFam" id="3.40.50.620:FF:000001">
    <property type="entry name" value="GMP synthase [glutamine-hydrolyzing]"/>
    <property type="match status" value="1"/>
</dbReference>
<dbReference type="FunFam" id="3.40.50.880:FF:000001">
    <property type="entry name" value="GMP synthase [glutamine-hydrolyzing]"/>
    <property type="match status" value="1"/>
</dbReference>
<dbReference type="Gene3D" id="3.30.300.10">
    <property type="match status" value="1"/>
</dbReference>
<dbReference type="Gene3D" id="3.40.50.880">
    <property type="match status" value="1"/>
</dbReference>
<dbReference type="Gene3D" id="3.40.50.620">
    <property type="entry name" value="HUPs"/>
    <property type="match status" value="1"/>
</dbReference>
<dbReference type="HAMAP" id="MF_00344">
    <property type="entry name" value="GMP_synthase"/>
    <property type="match status" value="1"/>
</dbReference>
<dbReference type="InterPro" id="IPR029062">
    <property type="entry name" value="Class_I_gatase-like"/>
</dbReference>
<dbReference type="InterPro" id="IPR017926">
    <property type="entry name" value="GATASE"/>
</dbReference>
<dbReference type="InterPro" id="IPR001674">
    <property type="entry name" value="GMP_synth_C"/>
</dbReference>
<dbReference type="InterPro" id="IPR004739">
    <property type="entry name" value="GMP_synth_GATase"/>
</dbReference>
<dbReference type="InterPro" id="IPR022955">
    <property type="entry name" value="GMP_synthase"/>
</dbReference>
<dbReference type="InterPro" id="IPR025777">
    <property type="entry name" value="GMPS_ATP_PPase_dom"/>
</dbReference>
<dbReference type="InterPro" id="IPR022310">
    <property type="entry name" value="NAD/GMP_synthase"/>
</dbReference>
<dbReference type="InterPro" id="IPR014729">
    <property type="entry name" value="Rossmann-like_a/b/a_fold"/>
</dbReference>
<dbReference type="NCBIfam" id="TIGR00884">
    <property type="entry name" value="guaA_Cterm"/>
    <property type="match status" value="1"/>
</dbReference>
<dbReference type="NCBIfam" id="TIGR00888">
    <property type="entry name" value="guaA_Nterm"/>
    <property type="match status" value="1"/>
</dbReference>
<dbReference type="NCBIfam" id="NF000848">
    <property type="entry name" value="PRK00074.1"/>
    <property type="match status" value="1"/>
</dbReference>
<dbReference type="PANTHER" id="PTHR11922:SF2">
    <property type="entry name" value="GMP SYNTHASE [GLUTAMINE-HYDROLYZING]"/>
    <property type="match status" value="1"/>
</dbReference>
<dbReference type="PANTHER" id="PTHR11922">
    <property type="entry name" value="GMP SYNTHASE-RELATED"/>
    <property type="match status" value="1"/>
</dbReference>
<dbReference type="Pfam" id="PF00117">
    <property type="entry name" value="GATase"/>
    <property type="match status" value="1"/>
</dbReference>
<dbReference type="Pfam" id="PF00958">
    <property type="entry name" value="GMP_synt_C"/>
    <property type="match status" value="1"/>
</dbReference>
<dbReference type="Pfam" id="PF02540">
    <property type="entry name" value="NAD_synthase"/>
    <property type="match status" value="1"/>
</dbReference>
<dbReference type="PRINTS" id="PR00097">
    <property type="entry name" value="ANTSNTHASEII"/>
</dbReference>
<dbReference type="PRINTS" id="PR00096">
    <property type="entry name" value="GATASE"/>
</dbReference>
<dbReference type="SUPFAM" id="SSF52402">
    <property type="entry name" value="Adenine nucleotide alpha hydrolases-like"/>
    <property type="match status" value="1"/>
</dbReference>
<dbReference type="SUPFAM" id="SSF52317">
    <property type="entry name" value="Class I glutamine amidotransferase-like"/>
    <property type="match status" value="1"/>
</dbReference>
<dbReference type="SUPFAM" id="SSF54810">
    <property type="entry name" value="GMP synthetase C-terminal dimerisation domain"/>
    <property type="match status" value="1"/>
</dbReference>
<dbReference type="PROSITE" id="PS51273">
    <property type="entry name" value="GATASE_TYPE_1"/>
    <property type="match status" value="1"/>
</dbReference>
<dbReference type="PROSITE" id="PS51553">
    <property type="entry name" value="GMPS_ATP_PPASE"/>
    <property type="match status" value="1"/>
</dbReference>
<sequence length="511" mass="56919">MKKADILVLDFGSQYTQLIARRLREQGVYAEILPFNVSLADIKAKEPKGIILSGGPASVYATDAYFCDKGIFDLGLPVLGICYGMQLMAHHYKATVAPAGHKEYGKANIEIKKDSALFKNLPKKQTVWMSHSDKVENLPDGFEVLATSENSPFCVFGNEDKKFFALQFHPEVQHSEFGKNILKNFAKYACNCESVWNMGSFAKTQAEKIREEVGNDKVLCAVSGGVDSSVVAALLASAIKEQVIVVFVDNGLLRSGEKEQVEFMFKNTLGIDLISIDASEIFLSRLANVRDPEQKRKIIGNTFIEVFEEEAKKHKDVKYLAQGTLYTDIIESSVVGASKTIKSHHNVGGLPEKMNLKLIEPLKEIFKDEVRALGLELGLSKEVVYRHPFPGPGLAIRIMGEVNRPSLELLRKVDVILLEELKSTGWYDKTWQAFCVLLNVKSVGVMGDNRTYDNAVCIRVVDASDGMTATFSHLPYEVLENISRRIINEVEGINRVVYDISSKPPATIEWE</sequence>
<feature type="chain" id="PRO_1000120249" description="GMP synthase [glutamine-hydrolyzing]">
    <location>
        <begin position="1"/>
        <end position="511"/>
    </location>
</feature>
<feature type="domain" description="Glutamine amidotransferase type-1" evidence="1">
    <location>
        <begin position="5"/>
        <end position="195"/>
    </location>
</feature>
<feature type="domain" description="GMPS ATP-PPase" evidence="1">
    <location>
        <begin position="196"/>
        <end position="386"/>
    </location>
</feature>
<feature type="active site" description="Nucleophile" evidence="1">
    <location>
        <position position="82"/>
    </location>
</feature>
<feature type="active site" evidence="1">
    <location>
        <position position="169"/>
    </location>
</feature>
<feature type="active site" evidence="1">
    <location>
        <position position="171"/>
    </location>
</feature>
<feature type="binding site" evidence="1">
    <location>
        <begin position="223"/>
        <end position="229"/>
    </location>
    <ligand>
        <name>ATP</name>
        <dbReference type="ChEBI" id="CHEBI:30616"/>
    </ligand>
</feature>